<organism>
    <name type="scientific">Homo sapiens</name>
    <name type="common">Human</name>
    <dbReference type="NCBI Taxonomy" id="9606"/>
    <lineage>
        <taxon>Eukaryota</taxon>
        <taxon>Metazoa</taxon>
        <taxon>Chordata</taxon>
        <taxon>Craniata</taxon>
        <taxon>Vertebrata</taxon>
        <taxon>Euteleostomi</taxon>
        <taxon>Mammalia</taxon>
        <taxon>Eutheria</taxon>
        <taxon>Euarchontoglires</taxon>
        <taxon>Primates</taxon>
        <taxon>Haplorrhini</taxon>
        <taxon>Catarrhini</taxon>
        <taxon>Hominidae</taxon>
        <taxon>Homo</taxon>
    </lineage>
</organism>
<protein>
    <recommendedName>
        <fullName>Cysteinyl leukotriene receptor 2</fullName>
        <shortName>CysLTR2</shortName>
    </recommendedName>
    <alternativeName>
        <fullName>G-protein coupled receptor GPCR21</fullName>
        <shortName>hGPCR21</shortName>
    </alternativeName>
    <alternativeName>
        <fullName>G-protein coupled receptor HG57</fullName>
    </alternativeName>
    <alternativeName>
        <fullName>HPN321</fullName>
    </alternativeName>
</protein>
<name>CLTR2_HUMAN</name>
<comment type="function">
    <text>Receptor for cysteinyl leukotrienes. The response is mediated via a G-protein that activates a phosphatidylinositol-calcium second messenger system. Stimulation by BAY u9773, a partial agonist, induces specific contractions of pulmonary veins and might also have an indirect role in the relaxation of the pulmonary vascular endothelium. The rank order of affinities for the leukotrienes is LTC4 = LTD4 &gt;&gt; LTE4.</text>
</comment>
<comment type="interaction">
    <interactant intactId="EBI-3843579">
        <id>Q9NS75</id>
    </interactant>
    <interactant intactId="EBI-357481">
        <id>Q12959</id>
        <label>DLG1</label>
    </interactant>
    <organismsDiffer>false</organismsDiffer>
    <experiments>7</experiments>
</comment>
<comment type="interaction">
    <interactant intactId="EBI-3843579">
        <id>Q9NS75</id>
    </interactant>
    <interactant intactId="EBI-11959885">
        <id>Q07627</id>
        <label>KRTAP1-1</label>
    </interactant>
    <organismsDiffer>false</organismsDiffer>
    <experiments>3</experiments>
</comment>
<comment type="interaction">
    <interactant intactId="EBI-3843579">
        <id>Q9NS75</id>
    </interactant>
    <interactant intactId="EBI-739832">
        <id>Q8TBB1</id>
        <label>LNX1</label>
    </interactant>
    <organismsDiffer>false</organismsDiffer>
    <experiments>3</experiments>
</comment>
<comment type="interaction">
    <interactant intactId="EBI-3843579">
        <id>Q9NS75</id>
    </interactant>
    <interactant intactId="EBI-11522433">
        <id>Q5JR59-3</id>
        <label>MTUS2</label>
    </interactant>
    <organismsDiffer>false</organismsDiffer>
    <experiments>3</experiments>
</comment>
<comment type="interaction">
    <interactant intactId="EBI-3843579">
        <id>Q9NS75</id>
    </interactant>
    <interactant intactId="EBI-357345">
        <id>Q14160</id>
        <label>SCRIB</label>
    </interactant>
    <organismsDiffer>false</organismsDiffer>
    <experiments>3</experiments>
</comment>
<comment type="subcellular location">
    <subcellularLocation>
        <location>Cell membrane</location>
        <topology>Multi-pass membrane protein</topology>
    </subcellularLocation>
</comment>
<comment type="tissue specificity">
    <text>Widely expressed, with highest levels in the heart, placenta, spleen, peripheral blood leukocytes and adrenal gland. In lung, expressed in the interstitial macrophages, and slightly in smooth muscle cells.</text>
</comment>
<comment type="similarity">
    <text evidence="2">Belongs to the G-protein coupled receptor 1 family.</text>
</comment>
<sequence length="346" mass="39635">MERKFMSLQPSISVSEMEPNGTFSNNNSRNCTIENFKREFFPIVYLIIFFWGVLGNGLSIYVFLQPYKKSTSVNVFMLNLAISDLLFISTLPFRADYYLRGSNWIFGDLACRIMSYSLYVNMYSSIYFLTVLSVVRFLAMVHPFRLLHVTSIRSAWILCGIIWILIMASSIMLLDSGSEQNGSVTSCLELNLYKIAKLQTMNYIALVVGCLLPFFTLSICYLLIIRVLLKVEVPESGLRVSHRKALTTIIITLIIFFLCFLPYHTLRTVHLTTWKVGLCKDRLHKALVITLALAAANACFNPLLYYFAGENFKDRLKSALRKGHPQKAKTKCVFPVSVWLRKETRV</sequence>
<keyword id="KW-1003">Cell membrane</keyword>
<keyword id="KW-1015">Disulfide bond</keyword>
<keyword id="KW-0297">G-protein coupled receptor</keyword>
<keyword id="KW-0325">Glycoprotein</keyword>
<keyword id="KW-0472">Membrane</keyword>
<keyword id="KW-0675">Receptor</keyword>
<keyword id="KW-1185">Reference proteome</keyword>
<keyword id="KW-0807">Transducer</keyword>
<keyword id="KW-0812">Transmembrane</keyword>
<keyword id="KW-1133">Transmembrane helix</keyword>
<reference key="1">
    <citation type="journal article" date="2000" name="Biochem. Biophys. Res. Commun.">
        <title>The molecular characterization and tissue distribution of the human cysteinyl leukotriene CysLT2 receptor.</title>
        <authorList>
            <person name="Takasaki J."/>
            <person name="Kamohara M."/>
            <person name="Matsumoto M."/>
            <person name="Saito T."/>
            <person name="Sugimoto T."/>
            <person name="Ota T."/>
            <person name="Nishikawa T."/>
            <person name="Kawai Y."/>
            <person name="Masuho Y."/>
            <person name="Isogai T."/>
            <person name="Suzuki Y."/>
            <person name="Sugano S."/>
            <person name="Furuichi K."/>
        </authorList>
    </citation>
    <scope>NUCLEOTIDE SEQUENCE [MRNA]</scope>
    <source>
        <tissue>Placenta</tissue>
    </source>
</reference>
<reference key="2">
    <citation type="journal article" date="2000" name="J. Biol. Chem.">
        <title>Characterization of the human cysteinyl leukotriene 2 receptor.</title>
        <authorList>
            <person name="Heise C.E."/>
            <person name="O'Dowd B.F."/>
            <person name="Figueroa D.J."/>
            <person name="Sawyer N."/>
            <person name="Nguyen T."/>
            <person name="Im D.-S."/>
            <person name="Stocco R."/>
            <person name="Bellefeuille J.N."/>
            <person name="Abramovitz M."/>
            <person name="Cheng R."/>
            <person name="Williams D.L. Jr."/>
            <person name="Zeng Z."/>
            <person name="Liu Q."/>
            <person name="Ma L."/>
            <person name="Clements M.K."/>
            <person name="Coulombe N."/>
            <person name="Liu Y."/>
            <person name="Austin C.P."/>
            <person name="George S.R."/>
            <person name="O'Neill G.P."/>
            <person name="Metters K.M."/>
            <person name="Lynch K.R."/>
            <person name="Evans J.F."/>
        </authorList>
    </citation>
    <scope>NUCLEOTIDE SEQUENCE [GENOMIC DNA]</scope>
</reference>
<reference key="3">
    <citation type="journal article" date="2000" name="Mol. Pharmacol.">
        <title>Molecular cloning and characterization of a second human cysteinyl leukotriene receptor: discovery of a subtype selective agonist.</title>
        <authorList>
            <person name="Nothacker H.-P."/>
            <person name="Wang Z."/>
            <person name="Zhu Y."/>
            <person name="Reinscheid R.K."/>
            <person name="Lin S.H.S."/>
            <person name="Civelli O."/>
        </authorList>
    </citation>
    <scope>NUCLEOTIDE SEQUENCE [GENOMIC DNA]</scope>
</reference>
<reference key="4">
    <citation type="journal article" date="2002" name="FEBS Lett.">
        <title>Identification of G protein-coupled receptor genes from the human genome sequence.</title>
        <authorList>
            <person name="Takeda S."/>
            <person name="Kadowaki S."/>
            <person name="Haga T."/>
            <person name="Takaesu H."/>
            <person name="Mitaku S."/>
        </authorList>
    </citation>
    <scope>NUCLEOTIDE SEQUENCE [LARGE SCALE GENOMIC DNA]</scope>
</reference>
<reference key="5">
    <citation type="submission" date="2003-09" db="EMBL/GenBank/DDBJ databases">
        <title>cDNA clones of human proteins involved in signal transduction sequenced by the Guthrie cDNA resource center (www.cdna.org).</title>
        <authorList>
            <person name="Kopatz S.A."/>
            <person name="Aronstam R.S."/>
            <person name="Sharma S.V."/>
        </authorList>
    </citation>
    <scope>NUCLEOTIDE SEQUENCE [LARGE SCALE MRNA]</scope>
</reference>
<reference key="6">
    <citation type="journal article" date="2004" name="Nature">
        <title>The DNA sequence and analysis of human chromosome 13.</title>
        <authorList>
            <person name="Dunham A."/>
            <person name="Matthews L.H."/>
            <person name="Burton J."/>
            <person name="Ashurst J.L."/>
            <person name="Howe K.L."/>
            <person name="Ashcroft K.J."/>
            <person name="Beare D.M."/>
            <person name="Burford D.C."/>
            <person name="Hunt S.E."/>
            <person name="Griffiths-Jones S."/>
            <person name="Jones M.C."/>
            <person name="Keenan S.J."/>
            <person name="Oliver K."/>
            <person name="Scott C.E."/>
            <person name="Ainscough R."/>
            <person name="Almeida J.P."/>
            <person name="Ambrose K.D."/>
            <person name="Andrews D.T."/>
            <person name="Ashwell R.I.S."/>
            <person name="Babbage A.K."/>
            <person name="Bagguley C.L."/>
            <person name="Bailey J."/>
            <person name="Bannerjee R."/>
            <person name="Barlow K.F."/>
            <person name="Bates K."/>
            <person name="Beasley H."/>
            <person name="Bird C.P."/>
            <person name="Bray-Allen S."/>
            <person name="Brown A.J."/>
            <person name="Brown J.Y."/>
            <person name="Burrill W."/>
            <person name="Carder C."/>
            <person name="Carter N.P."/>
            <person name="Chapman J.C."/>
            <person name="Clamp M.E."/>
            <person name="Clark S.Y."/>
            <person name="Clarke G."/>
            <person name="Clee C.M."/>
            <person name="Clegg S.C."/>
            <person name="Cobley V."/>
            <person name="Collins J.E."/>
            <person name="Corby N."/>
            <person name="Coville G.J."/>
            <person name="Deloukas P."/>
            <person name="Dhami P."/>
            <person name="Dunham I."/>
            <person name="Dunn M."/>
            <person name="Earthrowl M.E."/>
            <person name="Ellington A.G."/>
            <person name="Faulkner L."/>
            <person name="Frankish A.G."/>
            <person name="Frankland J."/>
            <person name="French L."/>
            <person name="Garner P."/>
            <person name="Garnett J."/>
            <person name="Gilbert J.G.R."/>
            <person name="Gilson C.J."/>
            <person name="Ghori J."/>
            <person name="Grafham D.V."/>
            <person name="Gribble S.M."/>
            <person name="Griffiths C."/>
            <person name="Hall R.E."/>
            <person name="Hammond S."/>
            <person name="Harley J.L."/>
            <person name="Hart E.A."/>
            <person name="Heath P.D."/>
            <person name="Howden P.J."/>
            <person name="Huckle E.J."/>
            <person name="Hunt P.J."/>
            <person name="Hunt A.R."/>
            <person name="Johnson C."/>
            <person name="Johnson D."/>
            <person name="Kay M."/>
            <person name="Kimberley A.M."/>
            <person name="King A."/>
            <person name="Laird G.K."/>
            <person name="Langford C.J."/>
            <person name="Lawlor S."/>
            <person name="Leongamornlert D.A."/>
            <person name="Lloyd D.M."/>
            <person name="Lloyd C."/>
            <person name="Loveland J.E."/>
            <person name="Lovell J."/>
            <person name="Martin S."/>
            <person name="Mashreghi-Mohammadi M."/>
            <person name="McLaren S.J."/>
            <person name="McMurray A."/>
            <person name="Milne S."/>
            <person name="Moore M.J.F."/>
            <person name="Nickerson T."/>
            <person name="Palmer S.A."/>
            <person name="Pearce A.V."/>
            <person name="Peck A.I."/>
            <person name="Pelan S."/>
            <person name="Phillimore B."/>
            <person name="Porter K.M."/>
            <person name="Rice C.M."/>
            <person name="Searle S."/>
            <person name="Sehra H.K."/>
            <person name="Shownkeen R."/>
            <person name="Skuce C.D."/>
            <person name="Smith M."/>
            <person name="Steward C.A."/>
            <person name="Sycamore N."/>
            <person name="Tester J."/>
            <person name="Thomas D.W."/>
            <person name="Tracey A."/>
            <person name="Tromans A."/>
            <person name="Tubby B."/>
            <person name="Wall M."/>
            <person name="Wallis J.M."/>
            <person name="West A.P."/>
            <person name="Whitehead S.L."/>
            <person name="Willey D.L."/>
            <person name="Wilming L."/>
            <person name="Wray P.W."/>
            <person name="Wright M.W."/>
            <person name="Young L."/>
            <person name="Coulson A."/>
            <person name="Durbin R.M."/>
            <person name="Hubbard T."/>
            <person name="Sulston J.E."/>
            <person name="Beck S."/>
            <person name="Bentley D.R."/>
            <person name="Rogers J."/>
            <person name="Ross M.T."/>
        </authorList>
    </citation>
    <scope>NUCLEOTIDE SEQUENCE [LARGE SCALE GENOMIC DNA]</scope>
</reference>
<reference key="7">
    <citation type="journal article" date="2004" name="Genome Res.">
        <title>The status, quality, and expansion of the NIH full-length cDNA project: the Mammalian Gene Collection (MGC).</title>
        <authorList>
            <consortium name="The MGC Project Team"/>
        </authorList>
    </citation>
    <scope>NUCLEOTIDE SEQUENCE [LARGE SCALE MRNA]</scope>
</reference>
<reference key="8">
    <citation type="submission" date="2000-04" db="EMBL/GenBank/DDBJ databases">
        <title>Homo sapiens cysteinyl leukotriene receptor 1 like receptor.</title>
        <authorList>
            <person name="Suga H."/>
        </authorList>
    </citation>
    <scope>NUCLEOTIDE SEQUENCE [GENOMIC DNA] OF 17-346</scope>
</reference>
<gene>
    <name type="primary">CYSLTR2</name>
    <name type="synonym">CYSLT2</name>
    <name type="synonym">CYSLT2R</name>
    <name type="ORF">PSEC0146</name>
</gene>
<proteinExistence type="evidence at protein level"/>
<dbReference type="EMBL" id="AB038269">
    <property type="protein sequence ID" value="BAB03601.1"/>
    <property type="molecule type" value="mRNA"/>
</dbReference>
<dbReference type="EMBL" id="AF254664">
    <property type="protein sequence ID" value="AAG17281.1"/>
    <property type="molecule type" value="Genomic_DNA"/>
</dbReference>
<dbReference type="EMBL" id="AF279611">
    <property type="protein sequence ID" value="AAK69485.1"/>
    <property type="molecule type" value="Genomic_DNA"/>
</dbReference>
<dbReference type="EMBL" id="AB083603">
    <property type="protein sequence ID" value="BAB89316.1"/>
    <property type="molecule type" value="Genomic_DNA"/>
</dbReference>
<dbReference type="EMBL" id="AY389504">
    <property type="protein sequence ID" value="AAQ91330.1"/>
    <property type="molecule type" value="Genomic_DNA"/>
</dbReference>
<dbReference type="EMBL" id="AL137118">
    <property type="status" value="NOT_ANNOTATED_CDS"/>
    <property type="molecule type" value="Genomic_DNA"/>
</dbReference>
<dbReference type="EMBL" id="BC069160">
    <property type="protein sequence ID" value="AAH69160.1"/>
    <property type="molecule type" value="mRNA"/>
</dbReference>
<dbReference type="EMBL" id="AB041644">
    <property type="protein sequence ID" value="BAB16379.1"/>
    <property type="molecule type" value="Genomic_DNA"/>
</dbReference>
<dbReference type="CCDS" id="CCDS9412.1"/>
<dbReference type="RefSeq" id="NP_001295394.1">
    <property type="nucleotide sequence ID" value="NM_001308465.3"/>
</dbReference>
<dbReference type="RefSeq" id="NP_001295396.1">
    <property type="nucleotide sequence ID" value="NM_001308467.3"/>
</dbReference>
<dbReference type="RefSeq" id="NP_001295397.1">
    <property type="nucleotide sequence ID" value="NM_001308468.3"/>
</dbReference>
<dbReference type="RefSeq" id="NP_001295398.1">
    <property type="nucleotide sequence ID" value="NM_001308469.3"/>
</dbReference>
<dbReference type="RefSeq" id="NP_001295399.1">
    <property type="nucleotide sequence ID" value="NM_001308470.3"/>
</dbReference>
<dbReference type="RefSeq" id="NP_001295400.1">
    <property type="nucleotide sequence ID" value="NM_001308471.3"/>
</dbReference>
<dbReference type="RefSeq" id="NP_001295405.1">
    <property type="nucleotide sequence ID" value="NM_001308476.3"/>
</dbReference>
<dbReference type="RefSeq" id="NP_001373941.1">
    <property type="nucleotide sequence ID" value="NM_001387012.1"/>
</dbReference>
<dbReference type="RefSeq" id="NP_001373942.1">
    <property type="nucleotide sequence ID" value="NM_001387013.1"/>
</dbReference>
<dbReference type="RefSeq" id="NP_001373943.1">
    <property type="nucleotide sequence ID" value="NM_001387014.1"/>
</dbReference>
<dbReference type="RefSeq" id="NP_065110.1">
    <property type="nucleotide sequence ID" value="NM_020377.5"/>
</dbReference>
<dbReference type="SMR" id="Q9NS75"/>
<dbReference type="BioGRID" id="121371">
    <property type="interactions" value="22"/>
</dbReference>
<dbReference type="CORUM" id="Q9NS75"/>
<dbReference type="FunCoup" id="Q9NS75">
    <property type="interactions" value="664"/>
</dbReference>
<dbReference type="IntAct" id="Q9NS75">
    <property type="interactions" value="34"/>
</dbReference>
<dbReference type="MINT" id="Q9NS75"/>
<dbReference type="STRING" id="9606.ENSP00000282018"/>
<dbReference type="BindingDB" id="Q9NS75"/>
<dbReference type="ChEMBL" id="CHEMBL4330"/>
<dbReference type="DrugBank" id="DB08855">
    <property type="generic name" value="Leukotriene C4"/>
</dbReference>
<dbReference type="DrugBank" id="DB11858">
    <property type="generic name" value="Leukotriene D4"/>
</dbReference>
<dbReference type="DrugBank" id="DB00716">
    <property type="generic name" value="Nedocromil"/>
</dbReference>
<dbReference type="DrugCentral" id="Q9NS75"/>
<dbReference type="GuidetoPHARMACOLOGY" id="270"/>
<dbReference type="SwissLipids" id="SLP:000001584"/>
<dbReference type="GlyCosmos" id="Q9NS75">
    <property type="glycosylation" value="4 sites, No reported glycans"/>
</dbReference>
<dbReference type="GlyGen" id="Q9NS75">
    <property type="glycosylation" value="4 sites"/>
</dbReference>
<dbReference type="iPTMnet" id="Q9NS75"/>
<dbReference type="PhosphoSitePlus" id="Q9NS75"/>
<dbReference type="BioMuta" id="CYSLTR2"/>
<dbReference type="DMDM" id="20138034"/>
<dbReference type="MassIVE" id="Q9NS75"/>
<dbReference type="PaxDb" id="9606-ENSP00000282018"/>
<dbReference type="ProteomicsDB" id="82506"/>
<dbReference type="Antibodypedia" id="9403">
    <property type="antibodies" value="236 antibodies from 27 providers"/>
</dbReference>
<dbReference type="DNASU" id="57105"/>
<dbReference type="Ensembl" id="ENST00000282018.4">
    <property type="protein sequence ID" value="ENSP00000282018.3"/>
    <property type="gene ID" value="ENSG00000152207.8"/>
</dbReference>
<dbReference type="Ensembl" id="ENST00000614739.4">
    <property type="protein sequence ID" value="ENSP00000477930.1"/>
    <property type="gene ID" value="ENSG00000152207.8"/>
</dbReference>
<dbReference type="Ensembl" id="ENST00000682523.1">
    <property type="protein sequence ID" value="ENSP00000508181.1"/>
    <property type="gene ID" value="ENSG00000152207.8"/>
</dbReference>
<dbReference type="GeneID" id="57105"/>
<dbReference type="KEGG" id="hsa:57105"/>
<dbReference type="MANE-Select" id="ENST00000682523.1">
    <property type="protein sequence ID" value="ENSP00000508181.1"/>
    <property type="RefSeq nucleotide sequence ID" value="NM_001308476.3"/>
    <property type="RefSeq protein sequence ID" value="NP_001295405.1"/>
</dbReference>
<dbReference type="UCSC" id="uc010ada.2">
    <property type="organism name" value="human"/>
</dbReference>
<dbReference type="AGR" id="HGNC:18274"/>
<dbReference type="CTD" id="57105"/>
<dbReference type="DisGeNET" id="57105"/>
<dbReference type="GeneCards" id="CYSLTR2"/>
<dbReference type="HGNC" id="HGNC:18274">
    <property type="gene designation" value="CYSLTR2"/>
</dbReference>
<dbReference type="HPA" id="ENSG00000152207">
    <property type="expression patterns" value="Tissue enhanced (placenta, seminal vesicle)"/>
</dbReference>
<dbReference type="MalaCards" id="CYSLTR2"/>
<dbReference type="MIM" id="605666">
    <property type="type" value="gene"/>
</dbReference>
<dbReference type="neXtProt" id="NX_Q9NS75"/>
<dbReference type="OpenTargets" id="ENSG00000152207"/>
<dbReference type="Orphanet" id="39044">
    <property type="disease" value="Uveal melanoma"/>
</dbReference>
<dbReference type="PharmGKB" id="PA38518"/>
<dbReference type="VEuPathDB" id="HostDB:ENSG00000152207"/>
<dbReference type="eggNOG" id="ENOG502RX8K">
    <property type="taxonomic scope" value="Eukaryota"/>
</dbReference>
<dbReference type="GeneTree" id="ENSGT01130000278275"/>
<dbReference type="HOGENOM" id="CLU_009579_8_2_1"/>
<dbReference type="InParanoid" id="Q9NS75"/>
<dbReference type="OMA" id="FCTIIVC"/>
<dbReference type="OrthoDB" id="9990906at2759"/>
<dbReference type="PAN-GO" id="Q9NS75">
    <property type="GO annotations" value="4 GO annotations based on evolutionary models"/>
</dbReference>
<dbReference type="PhylomeDB" id="Q9NS75"/>
<dbReference type="TreeFam" id="TF350009"/>
<dbReference type="PathwayCommons" id="Q9NS75"/>
<dbReference type="Reactome" id="R-HSA-391906">
    <property type="pathway name" value="Leukotriene receptors"/>
</dbReference>
<dbReference type="Reactome" id="R-HSA-416476">
    <property type="pathway name" value="G alpha (q) signalling events"/>
</dbReference>
<dbReference type="Reactome" id="R-HSA-418555">
    <property type="pathway name" value="G alpha (s) signalling events"/>
</dbReference>
<dbReference type="Reactome" id="R-HSA-9664535">
    <property type="pathway name" value="LTC4-CYSLTR mediated IL4 production"/>
</dbReference>
<dbReference type="SignaLink" id="Q9NS75"/>
<dbReference type="SIGNOR" id="Q9NS75"/>
<dbReference type="BioGRID-ORCS" id="57105">
    <property type="hits" value="12 hits in 1153 CRISPR screens"/>
</dbReference>
<dbReference type="GeneWiki" id="Cysteinyl_leukotriene_receptor_2"/>
<dbReference type="GenomeRNAi" id="57105"/>
<dbReference type="Pharos" id="Q9NS75">
    <property type="development level" value="Tchem"/>
</dbReference>
<dbReference type="PRO" id="PR:Q9NS75"/>
<dbReference type="Proteomes" id="UP000005640">
    <property type="component" value="Chromosome 13"/>
</dbReference>
<dbReference type="RNAct" id="Q9NS75">
    <property type="molecule type" value="protein"/>
</dbReference>
<dbReference type="Bgee" id="ENSG00000152207">
    <property type="expression patterns" value="Expressed in right adrenal gland cortex and 113 other cell types or tissues"/>
</dbReference>
<dbReference type="ExpressionAtlas" id="Q9NS75">
    <property type="expression patterns" value="baseline and differential"/>
</dbReference>
<dbReference type="GO" id="GO:0005886">
    <property type="term" value="C:plasma membrane"/>
    <property type="evidence" value="ECO:0000318"/>
    <property type="project" value="GO_Central"/>
</dbReference>
<dbReference type="GO" id="GO:0001631">
    <property type="term" value="F:cysteinyl leukotriene receptor activity"/>
    <property type="evidence" value="ECO:0000318"/>
    <property type="project" value="GO_Central"/>
</dbReference>
<dbReference type="GO" id="GO:0008528">
    <property type="term" value="F:G protein-coupled peptide receptor activity"/>
    <property type="evidence" value="ECO:0000318"/>
    <property type="project" value="GO_Central"/>
</dbReference>
<dbReference type="GO" id="GO:0004974">
    <property type="term" value="F:leukotriene receptor activity"/>
    <property type="evidence" value="ECO:0000303"/>
    <property type="project" value="UniProtKB"/>
</dbReference>
<dbReference type="GO" id="GO:0006955">
    <property type="term" value="P:immune response"/>
    <property type="evidence" value="ECO:0000303"/>
    <property type="project" value="UniProtKB"/>
</dbReference>
<dbReference type="GO" id="GO:0007218">
    <property type="term" value="P:neuropeptide signaling pathway"/>
    <property type="evidence" value="ECO:0000318"/>
    <property type="project" value="GO_Central"/>
</dbReference>
<dbReference type="CDD" id="cd15157">
    <property type="entry name" value="7tmA_CysLTR2"/>
    <property type="match status" value="1"/>
</dbReference>
<dbReference type="FunFam" id="1.20.1070.10:FF:000017">
    <property type="entry name" value="lysophosphatidic acid receptor 4"/>
    <property type="match status" value="1"/>
</dbReference>
<dbReference type="Gene3D" id="1.20.1070.10">
    <property type="entry name" value="Rhodopsin 7-helix transmembrane proteins"/>
    <property type="match status" value="1"/>
</dbReference>
<dbReference type="InterPro" id="IPR013311">
    <property type="entry name" value="CLT2_recept"/>
</dbReference>
<dbReference type="InterPro" id="IPR004071">
    <property type="entry name" value="Cyst_leuk_rcpt"/>
</dbReference>
<dbReference type="InterPro" id="IPR000276">
    <property type="entry name" value="GPCR_Rhodpsn"/>
</dbReference>
<dbReference type="InterPro" id="IPR017452">
    <property type="entry name" value="GPCR_Rhodpsn_7TM"/>
</dbReference>
<dbReference type="PANTHER" id="PTHR24231:SF48">
    <property type="entry name" value="G-PROTEIN COUPLED RECEPTORS FAMILY 1 PROFILE DOMAIN-CONTAINING PROTEIN"/>
    <property type="match status" value="1"/>
</dbReference>
<dbReference type="PANTHER" id="PTHR24231">
    <property type="entry name" value="PURINOCEPTOR-RELATED G-PROTEIN COUPLED RECEPTOR"/>
    <property type="match status" value="1"/>
</dbReference>
<dbReference type="Pfam" id="PF00001">
    <property type="entry name" value="7tm_1"/>
    <property type="match status" value="1"/>
</dbReference>
<dbReference type="PRINTS" id="PR01903">
    <property type="entry name" value="CYSLT2RECPTR"/>
</dbReference>
<dbReference type="PRINTS" id="PR01533">
    <property type="entry name" value="CYSLTRECPTR"/>
</dbReference>
<dbReference type="PRINTS" id="PR00237">
    <property type="entry name" value="GPCRRHODOPSN"/>
</dbReference>
<dbReference type="SUPFAM" id="SSF81321">
    <property type="entry name" value="Family A G protein-coupled receptor-like"/>
    <property type="match status" value="1"/>
</dbReference>
<dbReference type="PROSITE" id="PS50262">
    <property type="entry name" value="G_PROTEIN_RECEP_F1_2"/>
    <property type="match status" value="1"/>
</dbReference>
<feature type="chain" id="PRO_0000069303" description="Cysteinyl leukotriene receptor 2">
    <location>
        <begin position="1"/>
        <end position="346"/>
    </location>
</feature>
<feature type="topological domain" description="Extracellular" evidence="1">
    <location>
        <begin position="1"/>
        <end position="42"/>
    </location>
</feature>
<feature type="transmembrane region" description="Helical; Name=1" evidence="1">
    <location>
        <begin position="43"/>
        <end position="63"/>
    </location>
</feature>
<feature type="topological domain" description="Cytoplasmic" evidence="1">
    <location>
        <begin position="64"/>
        <end position="72"/>
    </location>
</feature>
<feature type="transmembrane region" description="Helical; Name=2" evidence="1">
    <location>
        <begin position="73"/>
        <end position="93"/>
    </location>
</feature>
<feature type="topological domain" description="Extracellular" evidence="1">
    <location>
        <begin position="94"/>
        <end position="123"/>
    </location>
</feature>
<feature type="transmembrane region" description="Helical; Name=3" evidence="1">
    <location>
        <begin position="124"/>
        <end position="144"/>
    </location>
</feature>
<feature type="topological domain" description="Cytoplasmic" evidence="1">
    <location>
        <begin position="145"/>
        <end position="153"/>
    </location>
</feature>
<feature type="transmembrane region" description="Helical; Name=4" evidence="1">
    <location>
        <begin position="154"/>
        <end position="174"/>
    </location>
</feature>
<feature type="topological domain" description="Extracellular" evidence="1">
    <location>
        <begin position="175"/>
        <end position="204"/>
    </location>
</feature>
<feature type="transmembrane region" description="Helical; Name=5" evidence="1">
    <location>
        <begin position="205"/>
        <end position="225"/>
    </location>
</feature>
<feature type="topological domain" description="Cytoplasmic" evidence="1">
    <location>
        <begin position="226"/>
        <end position="245"/>
    </location>
</feature>
<feature type="transmembrane region" description="Helical; Name=6" evidence="1">
    <location>
        <begin position="246"/>
        <end position="266"/>
    </location>
</feature>
<feature type="topological domain" description="Extracellular" evidence="1">
    <location>
        <begin position="267"/>
        <end position="286"/>
    </location>
</feature>
<feature type="transmembrane region" description="Helical; Name=7" evidence="1">
    <location>
        <begin position="287"/>
        <end position="307"/>
    </location>
</feature>
<feature type="topological domain" description="Cytoplasmic" evidence="1">
    <location>
        <begin position="308"/>
        <end position="346"/>
    </location>
</feature>
<feature type="glycosylation site" description="N-linked (GlcNAc...) asparagine" evidence="1">
    <location>
        <position position="20"/>
    </location>
</feature>
<feature type="glycosylation site" description="N-linked (GlcNAc...) asparagine" evidence="1">
    <location>
        <position position="26"/>
    </location>
</feature>
<feature type="glycosylation site" description="N-linked (GlcNAc...) asparagine" evidence="1">
    <location>
        <position position="30"/>
    </location>
</feature>
<feature type="glycosylation site" description="N-linked (GlcNAc...) asparagine" evidence="1">
    <location>
        <position position="181"/>
    </location>
</feature>
<feature type="disulfide bond" evidence="2">
    <location>
        <begin position="111"/>
        <end position="187"/>
    </location>
</feature>
<evidence type="ECO:0000255" key="1"/>
<evidence type="ECO:0000255" key="2">
    <source>
        <dbReference type="PROSITE-ProRule" id="PRU00521"/>
    </source>
</evidence>
<accession>Q9NS75</accession>
<accession>Q9HCQ2</accession>